<dbReference type="EC" id="5.4.2.10" evidence="1"/>
<dbReference type="EMBL" id="CP000422">
    <property type="protein sequence ID" value="ABJ67572.1"/>
    <property type="molecule type" value="Genomic_DNA"/>
</dbReference>
<dbReference type="RefSeq" id="WP_002834042.1">
    <property type="nucleotide sequence ID" value="NC_008525.1"/>
</dbReference>
<dbReference type="SMR" id="Q03GV0"/>
<dbReference type="STRING" id="278197.PEPE_0477"/>
<dbReference type="GeneID" id="33061564"/>
<dbReference type="KEGG" id="ppe:PEPE_0477"/>
<dbReference type="eggNOG" id="COG1109">
    <property type="taxonomic scope" value="Bacteria"/>
</dbReference>
<dbReference type="HOGENOM" id="CLU_016950_7_0_9"/>
<dbReference type="OrthoDB" id="9806956at2"/>
<dbReference type="Proteomes" id="UP000000773">
    <property type="component" value="Chromosome"/>
</dbReference>
<dbReference type="GO" id="GO:0005829">
    <property type="term" value="C:cytosol"/>
    <property type="evidence" value="ECO:0007669"/>
    <property type="project" value="TreeGrafter"/>
</dbReference>
<dbReference type="GO" id="GO:0000287">
    <property type="term" value="F:magnesium ion binding"/>
    <property type="evidence" value="ECO:0007669"/>
    <property type="project" value="UniProtKB-UniRule"/>
</dbReference>
<dbReference type="GO" id="GO:0008966">
    <property type="term" value="F:phosphoglucosamine mutase activity"/>
    <property type="evidence" value="ECO:0007669"/>
    <property type="project" value="UniProtKB-UniRule"/>
</dbReference>
<dbReference type="GO" id="GO:0004615">
    <property type="term" value="F:phosphomannomutase activity"/>
    <property type="evidence" value="ECO:0007669"/>
    <property type="project" value="TreeGrafter"/>
</dbReference>
<dbReference type="GO" id="GO:0005975">
    <property type="term" value="P:carbohydrate metabolic process"/>
    <property type="evidence" value="ECO:0007669"/>
    <property type="project" value="InterPro"/>
</dbReference>
<dbReference type="GO" id="GO:0009252">
    <property type="term" value="P:peptidoglycan biosynthetic process"/>
    <property type="evidence" value="ECO:0007669"/>
    <property type="project" value="TreeGrafter"/>
</dbReference>
<dbReference type="GO" id="GO:0006048">
    <property type="term" value="P:UDP-N-acetylglucosamine biosynthetic process"/>
    <property type="evidence" value="ECO:0007669"/>
    <property type="project" value="TreeGrafter"/>
</dbReference>
<dbReference type="CDD" id="cd05802">
    <property type="entry name" value="GlmM"/>
    <property type="match status" value="1"/>
</dbReference>
<dbReference type="FunFam" id="3.30.310.50:FF:000001">
    <property type="entry name" value="Phosphoglucosamine mutase"/>
    <property type="match status" value="1"/>
</dbReference>
<dbReference type="FunFam" id="3.40.120.10:FF:000001">
    <property type="entry name" value="Phosphoglucosamine mutase"/>
    <property type="match status" value="1"/>
</dbReference>
<dbReference type="FunFam" id="3.40.120.10:FF:000002">
    <property type="entry name" value="Phosphoglucosamine mutase"/>
    <property type="match status" value="1"/>
</dbReference>
<dbReference type="Gene3D" id="3.40.120.10">
    <property type="entry name" value="Alpha-D-Glucose-1,6-Bisphosphate, subunit A, domain 3"/>
    <property type="match status" value="3"/>
</dbReference>
<dbReference type="Gene3D" id="3.30.310.50">
    <property type="entry name" value="Alpha-D-phosphohexomutase, C-terminal domain"/>
    <property type="match status" value="1"/>
</dbReference>
<dbReference type="HAMAP" id="MF_01554_B">
    <property type="entry name" value="GlmM_B"/>
    <property type="match status" value="1"/>
</dbReference>
<dbReference type="InterPro" id="IPR005844">
    <property type="entry name" value="A-D-PHexomutase_a/b/a-I"/>
</dbReference>
<dbReference type="InterPro" id="IPR016055">
    <property type="entry name" value="A-D-PHexomutase_a/b/a-I/II/III"/>
</dbReference>
<dbReference type="InterPro" id="IPR005845">
    <property type="entry name" value="A-D-PHexomutase_a/b/a-II"/>
</dbReference>
<dbReference type="InterPro" id="IPR005846">
    <property type="entry name" value="A-D-PHexomutase_a/b/a-III"/>
</dbReference>
<dbReference type="InterPro" id="IPR005843">
    <property type="entry name" value="A-D-PHexomutase_C"/>
</dbReference>
<dbReference type="InterPro" id="IPR036900">
    <property type="entry name" value="A-D-PHexomutase_C_sf"/>
</dbReference>
<dbReference type="InterPro" id="IPR016066">
    <property type="entry name" value="A-D-PHexomutase_CS"/>
</dbReference>
<dbReference type="InterPro" id="IPR005841">
    <property type="entry name" value="Alpha-D-phosphohexomutase_SF"/>
</dbReference>
<dbReference type="InterPro" id="IPR018247">
    <property type="entry name" value="EF_Hand_1_Ca_BS"/>
</dbReference>
<dbReference type="InterPro" id="IPR006352">
    <property type="entry name" value="GlmM_bact"/>
</dbReference>
<dbReference type="InterPro" id="IPR050060">
    <property type="entry name" value="Phosphoglucosamine_mutase"/>
</dbReference>
<dbReference type="NCBIfam" id="TIGR01455">
    <property type="entry name" value="glmM"/>
    <property type="match status" value="1"/>
</dbReference>
<dbReference type="PANTHER" id="PTHR42946:SF1">
    <property type="entry name" value="PHOSPHOGLUCOMUTASE (ALPHA-D-GLUCOSE-1,6-BISPHOSPHATE-DEPENDENT)"/>
    <property type="match status" value="1"/>
</dbReference>
<dbReference type="PANTHER" id="PTHR42946">
    <property type="entry name" value="PHOSPHOHEXOSE MUTASE"/>
    <property type="match status" value="1"/>
</dbReference>
<dbReference type="Pfam" id="PF02878">
    <property type="entry name" value="PGM_PMM_I"/>
    <property type="match status" value="1"/>
</dbReference>
<dbReference type="Pfam" id="PF02879">
    <property type="entry name" value="PGM_PMM_II"/>
    <property type="match status" value="1"/>
</dbReference>
<dbReference type="Pfam" id="PF02880">
    <property type="entry name" value="PGM_PMM_III"/>
    <property type="match status" value="1"/>
</dbReference>
<dbReference type="Pfam" id="PF00408">
    <property type="entry name" value="PGM_PMM_IV"/>
    <property type="match status" value="1"/>
</dbReference>
<dbReference type="PRINTS" id="PR00509">
    <property type="entry name" value="PGMPMM"/>
</dbReference>
<dbReference type="SUPFAM" id="SSF55957">
    <property type="entry name" value="Phosphoglucomutase, C-terminal domain"/>
    <property type="match status" value="1"/>
</dbReference>
<dbReference type="SUPFAM" id="SSF53738">
    <property type="entry name" value="Phosphoglucomutase, first 3 domains"/>
    <property type="match status" value="3"/>
</dbReference>
<dbReference type="PROSITE" id="PS00710">
    <property type="entry name" value="PGM_PMM"/>
    <property type="match status" value="1"/>
</dbReference>
<accession>Q03GV0</accession>
<organism>
    <name type="scientific">Pediococcus pentosaceus (strain ATCC 25745 / CCUG 21536 / LMG 10740 / 183-1w)</name>
    <dbReference type="NCBI Taxonomy" id="278197"/>
    <lineage>
        <taxon>Bacteria</taxon>
        <taxon>Bacillati</taxon>
        <taxon>Bacillota</taxon>
        <taxon>Bacilli</taxon>
        <taxon>Lactobacillales</taxon>
        <taxon>Lactobacillaceae</taxon>
        <taxon>Pediococcus</taxon>
    </lineage>
</organism>
<evidence type="ECO:0000255" key="1">
    <source>
        <dbReference type="HAMAP-Rule" id="MF_01554"/>
    </source>
</evidence>
<comment type="function">
    <text evidence="1">Catalyzes the conversion of glucosamine-6-phosphate to glucosamine-1-phosphate.</text>
</comment>
<comment type="catalytic activity">
    <reaction evidence="1">
        <text>alpha-D-glucosamine 1-phosphate = D-glucosamine 6-phosphate</text>
        <dbReference type="Rhea" id="RHEA:23424"/>
        <dbReference type="ChEBI" id="CHEBI:58516"/>
        <dbReference type="ChEBI" id="CHEBI:58725"/>
        <dbReference type="EC" id="5.4.2.10"/>
    </reaction>
</comment>
<comment type="cofactor">
    <cofactor evidence="1">
        <name>Mg(2+)</name>
        <dbReference type="ChEBI" id="CHEBI:18420"/>
    </cofactor>
    <text evidence="1">Binds 1 Mg(2+) ion per subunit.</text>
</comment>
<comment type="PTM">
    <text evidence="1">Activated by phosphorylation.</text>
</comment>
<comment type="similarity">
    <text evidence="1">Belongs to the phosphohexose mutase family.</text>
</comment>
<protein>
    <recommendedName>
        <fullName evidence="1">Phosphoglucosamine mutase</fullName>
        <ecNumber evidence="1">5.4.2.10</ecNumber>
    </recommendedName>
</protein>
<sequence>MKLKYFGTDGVRGIANETLTPELAFQLGRAGGYVLTKHAKDDEQPRVLVSRDTRISGQLLKHALISGLLSVGIEVMDMGIVTTPGVAYLVRKQEADAGVMITASHNPVQDNGIKFFGSDGYKLSDELEAEIEVLLDADKDNLPRPSSTGLGSVTDYPEGGLNYTAFLEQTIPDDLEGLHIAIDAANGATSSYVSQIFADLNTEFDTMATNPDGLNINAGVGSTHPEGLAKFVVEKGADMGVAFDGDGDRCIAVDELGNIVDGDKIMYICGKFLSERGRLKDDTVVTTVMSNLGLYKALEANDMHSVKTQVGDRYVVEEMLKDGYNLGGEQSGHIVFLDHNTTGDGMLTAIQLMYVVKQTGKKLSELAADVTTYPQKLVNVRVQDKKLALENQAIKDIIEKVENEMNGEGRVLVRPSGTEDLLRIMAEAPTKEAVGQYVDRIVAVVQSEVGVD</sequence>
<name>GLMM_PEDPA</name>
<feature type="chain" id="PRO_0000305659" description="Phosphoglucosamine mutase">
    <location>
        <begin position="1"/>
        <end position="452"/>
    </location>
</feature>
<feature type="active site" description="Phosphoserine intermediate" evidence="1">
    <location>
        <position position="104"/>
    </location>
</feature>
<feature type="binding site" description="via phosphate group" evidence="1">
    <location>
        <position position="104"/>
    </location>
    <ligand>
        <name>Mg(2+)</name>
        <dbReference type="ChEBI" id="CHEBI:18420"/>
    </ligand>
</feature>
<feature type="binding site" evidence="1">
    <location>
        <position position="244"/>
    </location>
    <ligand>
        <name>Mg(2+)</name>
        <dbReference type="ChEBI" id="CHEBI:18420"/>
    </ligand>
</feature>
<feature type="binding site" evidence="1">
    <location>
        <position position="246"/>
    </location>
    <ligand>
        <name>Mg(2+)</name>
        <dbReference type="ChEBI" id="CHEBI:18420"/>
    </ligand>
</feature>
<feature type="binding site" evidence="1">
    <location>
        <position position="248"/>
    </location>
    <ligand>
        <name>Mg(2+)</name>
        <dbReference type="ChEBI" id="CHEBI:18420"/>
    </ligand>
</feature>
<feature type="modified residue" description="Phosphoserine" evidence="1">
    <location>
        <position position="104"/>
    </location>
</feature>
<gene>
    <name evidence="1" type="primary">glmM</name>
    <name type="ordered locus">PEPE_0477</name>
</gene>
<proteinExistence type="inferred from homology"/>
<reference key="1">
    <citation type="journal article" date="2006" name="Proc. Natl. Acad. Sci. U.S.A.">
        <title>Comparative genomics of the lactic acid bacteria.</title>
        <authorList>
            <person name="Makarova K.S."/>
            <person name="Slesarev A."/>
            <person name="Wolf Y.I."/>
            <person name="Sorokin A."/>
            <person name="Mirkin B."/>
            <person name="Koonin E.V."/>
            <person name="Pavlov A."/>
            <person name="Pavlova N."/>
            <person name="Karamychev V."/>
            <person name="Polouchine N."/>
            <person name="Shakhova V."/>
            <person name="Grigoriev I."/>
            <person name="Lou Y."/>
            <person name="Rohksar D."/>
            <person name="Lucas S."/>
            <person name="Huang K."/>
            <person name="Goodstein D.M."/>
            <person name="Hawkins T."/>
            <person name="Plengvidhya V."/>
            <person name="Welker D."/>
            <person name="Hughes J."/>
            <person name="Goh Y."/>
            <person name="Benson A."/>
            <person name="Baldwin K."/>
            <person name="Lee J.-H."/>
            <person name="Diaz-Muniz I."/>
            <person name="Dosti B."/>
            <person name="Smeianov V."/>
            <person name="Wechter W."/>
            <person name="Barabote R."/>
            <person name="Lorca G."/>
            <person name="Altermann E."/>
            <person name="Barrangou R."/>
            <person name="Ganesan B."/>
            <person name="Xie Y."/>
            <person name="Rawsthorne H."/>
            <person name="Tamir D."/>
            <person name="Parker C."/>
            <person name="Breidt F."/>
            <person name="Broadbent J.R."/>
            <person name="Hutkins R."/>
            <person name="O'Sullivan D."/>
            <person name="Steele J."/>
            <person name="Unlu G."/>
            <person name="Saier M.H. Jr."/>
            <person name="Klaenhammer T."/>
            <person name="Richardson P."/>
            <person name="Kozyavkin S."/>
            <person name="Weimer B.C."/>
            <person name="Mills D.A."/>
        </authorList>
    </citation>
    <scope>NUCLEOTIDE SEQUENCE [LARGE SCALE GENOMIC DNA]</scope>
    <source>
        <strain>ATCC 25745 / CCUG 21536 / LMG 10740 / 183-1w</strain>
    </source>
</reference>
<keyword id="KW-0413">Isomerase</keyword>
<keyword id="KW-0460">Magnesium</keyword>
<keyword id="KW-0479">Metal-binding</keyword>
<keyword id="KW-0597">Phosphoprotein</keyword>